<name>YECF_ECOLI</name>
<accession>P0AD07</accession>
<accession>O07984</accession>
<accession>P46120</accession>
<accession>P76312</accession>
<reference key="1">
    <citation type="journal article" date="1986" name="Nucleic Acids Res.">
        <title>Multiple control elements for the uvrC gene unit of Escherichia coli.</title>
        <authorList>
            <person name="Sharma S."/>
            <person name="Stark T.F."/>
            <person name="Beattie W.G."/>
            <person name="Moses R.E."/>
        </authorList>
    </citation>
    <scope>NUCLEOTIDE SEQUENCE [GENOMIC DNA]</scope>
</reference>
<reference key="2">
    <citation type="journal article" date="1996" name="DNA Res.">
        <title>A 460-kb DNA sequence of the Escherichia coli K-12 genome corresponding to the 40.1-50.0 min region on the linkage map.</title>
        <authorList>
            <person name="Itoh T."/>
            <person name="Aiba H."/>
            <person name="Baba T."/>
            <person name="Fujita K."/>
            <person name="Hayashi K."/>
            <person name="Inada T."/>
            <person name="Isono K."/>
            <person name="Kasai H."/>
            <person name="Kimura S."/>
            <person name="Kitakawa M."/>
            <person name="Kitagawa M."/>
            <person name="Makino K."/>
            <person name="Miki T."/>
            <person name="Mizobuchi K."/>
            <person name="Mori H."/>
            <person name="Mori T."/>
            <person name="Motomura K."/>
            <person name="Nakade S."/>
            <person name="Nakamura Y."/>
            <person name="Nashimoto H."/>
            <person name="Nishio Y."/>
            <person name="Oshima T."/>
            <person name="Saito N."/>
            <person name="Sampei G."/>
            <person name="Seki Y."/>
            <person name="Sivasundaram S."/>
            <person name="Tagami H."/>
            <person name="Takeda J."/>
            <person name="Takemoto K."/>
            <person name="Wada C."/>
            <person name="Yamamoto Y."/>
            <person name="Horiuchi T."/>
        </authorList>
    </citation>
    <scope>NUCLEOTIDE SEQUENCE [LARGE SCALE GENOMIC DNA]</scope>
    <source>
        <strain>K12 / W3110 / ATCC 27325 / DSM 5911</strain>
    </source>
</reference>
<reference key="3">
    <citation type="journal article" date="1997" name="Science">
        <title>The complete genome sequence of Escherichia coli K-12.</title>
        <authorList>
            <person name="Blattner F.R."/>
            <person name="Plunkett G. III"/>
            <person name="Bloch C.A."/>
            <person name="Perna N.T."/>
            <person name="Burland V."/>
            <person name="Riley M."/>
            <person name="Collado-Vides J."/>
            <person name="Glasner J.D."/>
            <person name="Rode C.K."/>
            <person name="Mayhew G.F."/>
            <person name="Gregor J."/>
            <person name="Davis N.W."/>
            <person name="Kirkpatrick H.A."/>
            <person name="Goeden M.A."/>
            <person name="Rose D.J."/>
            <person name="Mau B."/>
            <person name="Shao Y."/>
        </authorList>
    </citation>
    <scope>NUCLEOTIDE SEQUENCE [LARGE SCALE GENOMIC DNA]</scope>
    <source>
        <strain>K12 / MG1655 / ATCC 47076</strain>
    </source>
</reference>
<reference key="4">
    <citation type="journal article" date="2006" name="Mol. Syst. Biol.">
        <title>Highly accurate genome sequences of Escherichia coli K-12 strains MG1655 and W3110.</title>
        <authorList>
            <person name="Hayashi K."/>
            <person name="Morooka N."/>
            <person name="Yamamoto Y."/>
            <person name="Fujita K."/>
            <person name="Isono K."/>
            <person name="Choi S."/>
            <person name="Ohtsubo E."/>
            <person name="Baba T."/>
            <person name="Wanner B.L."/>
            <person name="Mori H."/>
            <person name="Horiuchi T."/>
        </authorList>
    </citation>
    <scope>NUCLEOTIDE SEQUENCE [LARGE SCALE GENOMIC DNA]</scope>
    <source>
        <strain>K12 / W3110 / ATCC 27325 / DSM 5911</strain>
    </source>
</reference>
<reference key="5">
    <citation type="journal article" date="1995" name="Nucleic Acids Res.">
        <title>Detection of new genes in a bacterial genome using Markov models for three gene classes.</title>
        <authorList>
            <person name="Borodovsky M."/>
            <person name="McIninch J."/>
            <person name="Koonin E.V."/>
            <person name="Rudd K.E."/>
            <person name="Medigue C."/>
            <person name="Danchin A."/>
        </authorList>
    </citation>
    <scope>IDENTIFICATION</scope>
</reference>
<keyword id="KW-1185">Reference proteome</keyword>
<dbReference type="EMBL" id="X03691">
    <property type="status" value="NOT_ANNOTATED_CDS"/>
    <property type="molecule type" value="Genomic_DNA"/>
</dbReference>
<dbReference type="EMBL" id="U00096">
    <property type="protein sequence ID" value="AAC74982.1"/>
    <property type="molecule type" value="Genomic_DNA"/>
</dbReference>
<dbReference type="EMBL" id="AP009048">
    <property type="protein sequence ID" value="BAA15735.1"/>
    <property type="molecule type" value="Genomic_DNA"/>
</dbReference>
<dbReference type="PIR" id="H64954">
    <property type="entry name" value="H64954"/>
</dbReference>
<dbReference type="RefSeq" id="NP_416425.1">
    <property type="nucleotide sequence ID" value="NC_000913.3"/>
</dbReference>
<dbReference type="RefSeq" id="WP_000106474.1">
    <property type="nucleotide sequence ID" value="NZ_STEB01000026.1"/>
</dbReference>
<dbReference type="SMR" id="P0AD07"/>
<dbReference type="BioGRID" id="4260372">
    <property type="interactions" value="27"/>
</dbReference>
<dbReference type="FunCoup" id="P0AD07">
    <property type="interactions" value="30"/>
</dbReference>
<dbReference type="IntAct" id="P0AD07">
    <property type="interactions" value="15"/>
</dbReference>
<dbReference type="STRING" id="511145.b1915"/>
<dbReference type="jPOST" id="P0AD07"/>
<dbReference type="PaxDb" id="511145-b1915"/>
<dbReference type="EnsemblBacteria" id="AAC74982">
    <property type="protein sequence ID" value="AAC74982"/>
    <property type="gene ID" value="b1915"/>
</dbReference>
<dbReference type="GeneID" id="93776221"/>
<dbReference type="GeneID" id="946420"/>
<dbReference type="KEGG" id="ecj:JW1900"/>
<dbReference type="KEGG" id="eco:b1915"/>
<dbReference type="KEGG" id="ecoc:C3026_10870"/>
<dbReference type="PATRIC" id="fig|511145.12.peg.1997"/>
<dbReference type="EchoBASE" id="EB2703"/>
<dbReference type="eggNOG" id="ENOG50330IE">
    <property type="taxonomic scope" value="Bacteria"/>
</dbReference>
<dbReference type="HOGENOM" id="CLU_200496_0_0_6"/>
<dbReference type="InParanoid" id="P0AD07"/>
<dbReference type="OMA" id="MTLMLKS"/>
<dbReference type="OrthoDB" id="6475550at2"/>
<dbReference type="PhylomeDB" id="P0AD07"/>
<dbReference type="BioCyc" id="EcoCyc:EG12861-MONOMER"/>
<dbReference type="PRO" id="PR:P0AD07"/>
<dbReference type="Proteomes" id="UP000000625">
    <property type="component" value="Chromosome"/>
</dbReference>
<dbReference type="InterPro" id="IPR019705">
    <property type="entry name" value="DUF2594"/>
</dbReference>
<dbReference type="NCBIfam" id="NF007904">
    <property type="entry name" value="PRK10613.1"/>
    <property type="match status" value="1"/>
</dbReference>
<dbReference type="Pfam" id="PF10769">
    <property type="entry name" value="DUF2594"/>
    <property type="match status" value="1"/>
</dbReference>
<sequence length="74" mass="8239">MSTPDFSTAENNQELANEVSCLKAMLTLMLQAMGQADAGRVMLKMEKQLALIEDETQAAVFSKTVKQIKQAYRQ</sequence>
<evidence type="ECO:0000305" key="1"/>
<protein>
    <recommendedName>
        <fullName>Uncharacterized protein YecF</fullName>
    </recommendedName>
</protein>
<organism>
    <name type="scientific">Escherichia coli (strain K12)</name>
    <dbReference type="NCBI Taxonomy" id="83333"/>
    <lineage>
        <taxon>Bacteria</taxon>
        <taxon>Pseudomonadati</taxon>
        <taxon>Pseudomonadota</taxon>
        <taxon>Gammaproteobacteria</taxon>
        <taxon>Enterobacterales</taxon>
        <taxon>Enterobacteriaceae</taxon>
        <taxon>Escherichia</taxon>
    </lineage>
</organism>
<proteinExistence type="predicted"/>
<feature type="chain" id="PRO_0000169073" description="Uncharacterized protein YecF">
    <location>
        <begin position="1"/>
        <end position="74"/>
    </location>
</feature>
<gene>
    <name type="primary">yecF</name>
    <name type="ordered locus">b1915</name>
    <name type="ordered locus">JW1900</name>
</gene>
<comment type="sequence caution" evidence="1">
    <conflict type="frameshift">
        <sequence resource="EMBL" id="X03691"/>
    </conflict>
</comment>